<dbReference type="EMBL" id="CT573213">
    <property type="protein sequence ID" value="CAJ59757.1"/>
    <property type="molecule type" value="Genomic_DNA"/>
</dbReference>
<dbReference type="SMR" id="Q0RRR0"/>
<dbReference type="STRING" id="326424.FRAAL1092"/>
<dbReference type="KEGG" id="fal:FRAAL1092"/>
<dbReference type="eggNOG" id="COG0198">
    <property type="taxonomic scope" value="Bacteria"/>
</dbReference>
<dbReference type="HOGENOM" id="CLU_093315_2_2_11"/>
<dbReference type="Proteomes" id="UP000000657">
    <property type="component" value="Chromosome"/>
</dbReference>
<dbReference type="GO" id="GO:1990904">
    <property type="term" value="C:ribonucleoprotein complex"/>
    <property type="evidence" value="ECO:0007669"/>
    <property type="project" value="UniProtKB-KW"/>
</dbReference>
<dbReference type="GO" id="GO:0005840">
    <property type="term" value="C:ribosome"/>
    <property type="evidence" value="ECO:0007669"/>
    <property type="project" value="UniProtKB-KW"/>
</dbReference>
<dbReference type="GO" id="GO:0019843">
    <property type="term" value="F:rRNA binding"/>
    <property type="evidence" value="ECO:0007669"/>
    <property type="project" value="UniProtKB-UniRule"/>
</dbReference>
<dbReference type="GO" id="GO:0003735">
    <property type="term" value="F:structural constituent of ribosome"/>
    <property type="evidence" value="ECO:0007669"/>
    <property type="project" value="InterPro"/>
</dbReference>
<dbReference type="GO" id="GO:0006412">
    <property type="term" value="P:translation"/>
    <property type="evidence" value="ECO:0007669"/>
    <property type="project" value="UniProtKB-UniRule"/>
</dbReference>
<dbReference type="CDD" id="cd06089">
    <property type="entry name" value="KOW_RPL26"/>
    <property type="match status" value="1"/>
</dbReference>
<dbReference type="FunFam" id="2.30.30.30:FF:000004">
    <property type="entry name" value="50S ribosomal protein L24"/>
    <property type="match status" value="1"/>
</dbReference>
<dbReference type="Gene3D" id="2.30.30.30">
    <property type="match status" value="1"/>
</dbReference>
<dbReference type="HAMAP" id="MF_01326_B">
    <property type="entry name" value="Ribosomal_uL24_B"/>
    <property type="match status" value="1"/>
</dbReference>
<dbReference type="InterPro" id="IPR005824">
    <property type="entry name" value="KOW"/>
</dbReference>
<dbReference type="InterPro" id="IPR014722">
    <property type="entry name" value="Rib_uL2_dom2"/>
</dbReference>
<dbReference type="InterPro" id="IPR003256">
    <property type="entry name" value="Ribosomal_uL24"/>
</dbReference>
<dbReference type="InterPro" id="IPR005825">
    <property type="entry name" value="Ribosomal_uL24_CS"/>
</dbReference>
<dbReference type="InterPro" id="IPR041988">
    <property type="entry name" value="Ribosomal_uL24_KOW"/>
</dbReference>
<dbReference type="InterPro" id="IPR008991">
    <property type="entry name" value="Translation_prot_SH3-like_sf"/>
</dbReference>
<dbReference type="NCBIfam" id="TIGR01079">
    <property type="entry name" value="rplX_bact"/>
    <property type="match status" value="1"/>
</dbReference>
<dbReference type="PANTHER" id="PTHR12903">
    <property type="entry name" value="MITOCHONDRIAL RIBOSOMAL PROTEIN L24"/>
    <property type="match status" value="1"/>
</dbReference>
<dbReference type="Pfam" id="PF00467">
    <property type="entry name" value="KOW"/>
    <property type="match status" value="1"/>
</dbReference>
<dbReference type="Pfam" id="PF17136">
    <property type="entry name" value="ribosomal_L24"/>
    <property type="match status" value="1"/>
</dbReference>
<dbReference type="SMART" id="SM00739">
    <property type="entry name" value="KOW"/>
    <property type="match status" value="1"/>
</dbReference>
<dbReference type="SUPFAM" id="SSF50104">
    <property type="entry name" value="Translation proteins SH3-like domain"/>
    <property type="match status" value="1"/>
</dbReference>
<dbReference type="PROSITE" id="PS01108">
    <property type="entry name" value="RIBOSOMAL_L24"/>
    <property type="match status" value="1"/>
</dbReference>
<organism>
    <name type="scientific">Frankia alni (strain DSM 45986 / CECT 9034 / ACN14a)</name>
    <dbReference type="NCBI Taxonomy" id="326424"/>
    <lineage>
        <taxon>Bacteria</taxon>
        <taxon>Bacillati</taxon>
        <taxon>Actinomycetota</taxon>
        <taxon>Actinomycetes</taxon>
        <taxon>Frankiales</taxon>
        <taxon>Frankiaceae</taxon>
        <taxon>Frankia</taxon>
    </lineage>
</organism>
<proteinExistence type="inferred from homology"/>
<keyword id="KW-1185">Reference proteome</keyword>
<keyword id="KW-0687">Ribonucleoprotein</keyword>
<keyword id="KW-0689">Ribosomal protein</keyword>
<keyword id="KW-0694">RNA-binding</keyword>
<keyword id="KW-0699">rRNA-binding</keyword>
<evidence type="ECO:0000255" key="1">
    <source>
        <dbReference type="HAMAP-Rule" id="MF_01326"/>
    </source>
</evidence>
<evidence type="ECO:0000305" key="2"/>
<comment type="function">
    <text evidence="1">One of two assembly initiator proteins, it binds directly to the 5'-end of the 23S rRNA, where it nucleates assembly of the 50S subunit.</text>
</comment>
<comment type="function">
    <text evidence="1">One of the proteins that surrounds the polypeptide exit tunnel on the outside of the subunit.</text>
</comment>
<comment type="subunit">
    <text evidence="1">Part of the 50S ribosomal subunit.</text>
</comment>
<comment type="similarity">
    <text evidence="1">Belongs to the universal ribosomal protein uL24 family.</text>
</comment>
<gene>
    <name evidence="1" type="primary">rplX</name>
    <name type="ordered locus">FRAAL1092</name>
</gene>
<feature type="chain" id="PRO_0000355681" description="Large ribosomal subunit protein uL24">
    <location>
        <begin position="1"/>
        <end position="110"/>
    </location>
</feature>
<reference key="1">
    <citation type="journal article" date="2007" name="Genome Res.">
        <title>Genome characteristics of facultatively symbiotic Frankia sp. strains reflect host range and host plant biogeography.</title>
        <authorList>
            <person name="Normand P."/>
            <person name="Lapierre P."/>
            <person name="Tisa L.S."/>
            <person name="Gogarten J.P."/>
            <person name="Alloisio N."/>
            <person name="Bagnarol E."/>
            <person name="Bassi C.A."/>
            <person name="Berry A.M."/>
            <person name="Bickhart D.M."/>
            <person name="Choisne N."/>
            <person name="Couloux A."/>
            <person name="Cournoyer B."/>
            <person name="Cruveiller S."/>
            <person name="Daubin V."/>
            <person name="Demange N."/>
            <person name="Francino M.P."/>
            <person name="Goltsman E."/>
            <person name="Huang Y."/>
            <person name="Kopp O.R."/>
            <person name="Labarre L."/>
            <person name="Lapidus A."/>
            <person name="Lavire C."/>
            <person name="Marechal J."/>
            <person name="Martinez M."/>
            <person name="Mastronunzio J.E."/>
            <person name="Mullin B.C."/>
            <person name="Niemann J."/>
            <person name="Pujic P."/>
            <person name="Rawnsley T."/>
            <person name="Rouy Z."/>
            <person name="Schenowitz C."/>
            <person name="Sellstedt A."/>
            <person name="Tavares F."/>
            <person name="Tomkins J.P."/>
            <person name="Vallenet D."/>
            <person name="Valverde C."/>
            <person name="Wall L.G."/>
            <person name="Wang Y."/>
            <person name="Medigue C."/>
            <person name="Benson D.R."/>
        </authorList>
    </citation>
    <scope>NUCLEOTIDE SEQUENCE [LARGE SCALE GENOMIC DNA]</scope>
    <source>
        <strain>DSM 45986 / CECT 9034 / ACN14a</strain>
    </source>
</reference>
<sequence length="110" mass="12048">MTVATLKIKKGDTVQIITGKDRGLKGKVIRAYPEQNKVLVEGANRITRHTRVQQSARGSQSGGIVTQEAPIHVSNVMIVDPSDGRPTRIGYRINEDGTKVRISRRTGAEL</sequence>
<accession>Q0RRR0</accession>
<name>RL24_FRAAA</name>
<protein>
    <recommendedName>
        <fullName evidence="1">Large ribosomal subunit protein uL24</fullName>
    </recommendedName>
    <alternativeName>
        <fullName evidence="2">50S ribosomal protein L24</fullName>
    </alternativeName>
</protein>